<comment type="similarity">
    <text evidence="1">Belongs to the bacterial ribosomal protein bL36 family.</text>
</comment>
<feature type="chain" id="PRO_0000302303" description="Large ribosomal subunit protein bL36">
    <location>
        <begin position="1"/>
        <end position="37"/>
    </location>
</feature>
<feature type="strand" evidence="3">
    <location>
        <begin position="11"/>
        <end position="13"/>
    </location>
</feature>
<feature type="strand" evidence="3">
    <location>
        <begin position="15"/>
        <end position="21"/>
    </location>
</feature>
<feature type="strand" evidence="3">
    <location>
        <begin position="23"/>
        <end position="26"/>
    </location>
</feature>
<feature type="helix" evidence="3">
    <location>
        <begin position="30"/>
        <end position="32"/>
    </location>
</feature>
<organism>
    <name type="scientific">Staphylococcus aureus (strain NCTC 8325 / PS 47)</name>
    <dbReference type="NCBI Taxonomy" id="93061"/>
    <lineage>
        <taxon>Bacteria</taxon>
        <taxon>Bacillati</taxon>
        <taxon>Bacillota</taxon>
        <taxon>Bacilli</taxon>
        <taxon>Bacillales</taxon>
        <taxon>Staphylococcaceae</taxon>
        <taxon>Staphylococcus</taxon>
    </lineage>
</organism>
<evidence type="ECO:0000255" key="1">
    <source>
        <dbReference type="HAMAP-Rule" id="MF_00251"/>
    </source>
</evidence>
<evidence type="ECO:0000305" key="2"/>
<evidence type="ECO:0007829" key="3">
    <source>
        <dbReference type="PDB" id="7ASM"/>
    </source>
</evidence>
<dbReference type="EMBL" id="CP000253">
    <property type="protein sequence ID" value="ABD31507.1"/>
    <property type="molecule type" value="Genomic_DNA"/>
</dbReference>
<dbReference type="RefSeq" id="WP_000868342.1">
    <property type="nucleotide sequence ID" value="NZ_LS483365.1"/>
</dbReference>
<dbReference type="RefSeq" id="YP_500956.1">
    <property type="nucleotide sequence ID" value="NC_007795.1"/>
</dbReference>
<dbReference type="PDB" id="4WCE">
    <property type="method" value="X-ray"/>
    <property type="resolution" value="3.53 A"/>
    <property type="chains" value="4=1-37"/>
</dbReference>
<dbReference type="PDB" id="4WFA">
    <property type="method" value="X-ray"/>
    <property type="resolution" value="3.39 A"/>
    <property type="chains" value="4=1-37"/>
</dbReference>
<dbReference type="PDB" id="4WFB">
    <property type="method" value="X-ray"/>
    <property type="resolution" value="3.43 A"/>
    <property type="chains" value="4=1-37"/>
</dbReference>
<dbReference type="PDB" id="5HL7">
    <property type="method" value="X-ray"/>
    <property type="resolution" value="3.55 A"/>
    <property type="chains" value="4=1-37"/>
</dbReference>
<dbReference type="PDB" id="5LI0">
    <property type="method" value="EM"/>
    <property type="resolution" value="3.80 A"/>
    <property type="chains" value="8=1-37"/>
</dbReference>
<dbReference type="PDB" id="5ND8">
    <property type="method" value="EM"/>
    <property type="resolution" value="3.70 A"/>
    <property type="chains" value="8=1-37"/>
</dbReference>
<dbReference type="PDB" id="5ND9">
    <property type="method" value="EM"/>
    <property type="resolution" value="3.70 A"/>
    <property type="chains" value="8=1-37"/>
</dbReference>
<dbReference type="PDB" id="5TCU">
    <property type="method" value="EM"/>
    <property type="resolution" value="3.90 A"/>
    <property type="chains" value="LI=1-37"/>
</dbReference>
<dbReference type="PDB" id="6DDD">
    <property type="method" value="EM"/>
    <property type="resolution" value="3.10 A"/>
    <property type="chains" value="R=1-37"/>
</dbReference>
<dbReference type="PDB" id="6DDG">
    <property type="method" value="EM"/>
    <property type="resolution" value="3.10 A"/>
    <property type="chains" value="R=1-37"/>
</dbReference>
<dbReference type="PDB" id="6HMA">
    <property type="method" value="EM"/>
    <property type="resolution" value="2.65 A"/>
    <property type="chains" value="4=1-37"/>
</dbReference>
<dbReference type="PDB" id="6WQN">
    <property type="method" value="EM"/>
    <property type="resolution" value="2.90 A"/>
    <property type="chains" value="R=1-37"/>
</dbReference>
<dbReference type="PDB" id="6WQQ">
    <property type="method" value="EM"/>
    <property type="resolution" value="3.10 A"/>
    <property type="chains" value="R=1-37"/>
</dbReference>
<dbReference type="PDB" id="6WRS">
    <property type="method" value="EM"/>
    <property type="resolution" value="3.20 A"/>
    <property type="chains" value="R=1-37"/>
</dbReference>
<dbReference type="PDB" id="6WRU">
    <property type="method" value="EM"/>
    <property type="resolution" value="3.10 A"/>
    <property type="chains" value="R=1-37"/>
</dbReference>
<dbReference type="PDB" id="6YEF">
    <property type="method" value="EM"/>
    <property type="resolution" value="3.20 A"/>
    <property type="chains" value="8=1-37"/>
</dbReference>
<dbReference type="PDB" id="7ASM">
    <property type="method" value="EM"/>
    <property type="resolution" value="2.48 A"/>
    <property type="chains" value="4=1-37"/>
</dbReference>
<dbReference type="PDB" id="7NHL">
    <property type="method" value="EM"/>
    <property type="resolution" value="3.10 A"/>
    <property type="chains" value="9=1-37"/>
</dbReference>
<dbReference type="PDB" id="7NHM">
    <property type="method" value="EM"/>
    <property type="resolution" value="3.10 A"/>
    <property type="chains" value="9=1-37"/>
</dbReference>
<dbReference type="PDB" id="7TTU">
    <property type="method" value="EM"/>
    <property type="resolution" value="3.00 A"/>
    <property type="chains" value="R=1-37"/>
</dbReference>
<dbReference type="PDB" id="7TTW">
    <property type="method" value="EM"/>
    <property type="resolution" value="2.90 A"/>
    <property type="chains" value="R=1-37"/>
</dbReference>
<dbReference type="PDB" id="8P2F">
    <property type="method" value="EM"/>
    <property type="resolution" value="2.44 A"/>
    <property type="chains" value="9=1-37"/>
</dbReference>
<dbReference type="PDB" id="8P2G">
    <property type="method" value="EM"/>
    <property type="resolution" value="2.02 A"/>
    <property type="chains" value="9=1-37"/>
</dbReference>
<dbReference type="PDB" id="8P2H">
    <property type="method" value="EM"/>
    <property type="resolution" value="2.49 A"/>
    <property type="chains" value="9=1-37"/>
</dbReference>
<dbReference type="PDBsum" id="4WCE"/>
<dbReference type="PDBsum" id="4WFA"/>
<dbReference type="PDBsum" id="4WFB"/>
<dbReference type="PDBsum" id="5HL7"/>
<dbReference type="PDBsum" id="5LI0"/>
<dbReference type="PDBsum" id="5ND8"/>
<dbReference type="PDBsum" id="5ND9"/>
<dbReference type="PDBsum" id="5TCU"/>
<dbReference type="PDBsum" id="6DDD"/>
<dbReference type="PDBsum" id="6DDG"/>
<dbReference type="PDBsum" id="6HMA"/>
<dbReference type="PDBsum" id="6WQN"/>
<dbReference type="PDBsum" id="6WQQ"/>
<dbReference type="PDBsum" id="6WRS"/>
<dbReference type="PDBsum" id="6WRU"/>
<dbReference type="PDBsum" id="6YEF"/>
<dbReference type="PDBsum" id="7ASM"/>
<dbReference type="PDBsum" id="7NHL"/>
<dbReference type="PDBsum" id="7NHM"/>
<dbReference type="PDBsum" id="7TTU"/>
<dbReference type="PDBsum" id="7TTW"/>
<dbReference type="PDBsum" id="8P2F"/>
<dbReference type="PDBsum" id="8P2G"/>
<dbReference type="PDBsum" id="8P2H"/>
<dbReference type="EMDB" id="EMD-10791"/>
<dbReference type="EMDB" id="EMD-12332"/>
<dbReference type="EMDB" id="EMD-12333"/>
<dbReference type="EMDB" id="EMD-17363"/>
<dbReference type="EMDB" id="EMD-17364"/>
<dbReference type="EMDB" id="EMD-17365"/>
<dbReference type="EMDB" id="EMD-3624"/>
<dbReference type="EMDB" id="EMD-3625"/>
<dbReference type="EMDB" id="EMD-4050"/>
<dbReference type="EMDB" id="EMD-8402"/>
<dbReference type="SMR" id="Q2FW29"/>
<dbReference type="IntAct" id="Q2FW29">
    <property type="interactions" value="1"/>
</dbReference>
<dbReference type="STRING" id="93061.SAOUHSC_02488"/>
<dbReference type="PaxDb" id="1280-SAXN108_2477"/>
<dbReference type="GeneID" id="3920865"/>
<dbReference type="GeneID" id="98346539"/>
<dbReference type="KEGG" id="sao:SAOUHSC_02488"/>
<dbReference type="PATRIC" id="fig|93061.5.peg.2244"/>
<dbReference type="eggNOG" id="COG0257">
    <property type="taxonomic scope" value="Bacteria"/>
</dbReference>
<dbReference type="HOGENOM" id="CLU_135723_6_2_9"/>
<dbReference type="OrthoDB" id="9802520at2"/>
<dbReference type="EvolutionaryTrace" id="Q2FW29"/>
<dbReference type="PRO" id="PR:Q2FW29"/>
<dbReference type="Proteomes" id="UP000008816">
    <property type="component" value="Chromosome"/>
</dbReference>
<dbReference type="GO" id="GO:0005737">
    <property type="term" value="C:cytoplasm"/>
    <property type="evidence" value="ECO:0007669"/>
    <property type="project" value="UniProtKB-ARBA"/>
</dbReference>
<dbReference type="GO" id="GO:1990904">
    <property type="term" value="C:ribonucleoprotein complex"/>
    <property type="evidence" value="ECO:0007669"/>
    <property type="project" value="UniProtKB-KW"/>
</dbReference>
<dbReference type="GO" id="GO:0005840">
    <property type="term" value="C:ribosome"/>
    <property type="evidence" value="ECO:0007669"/>
    <property type="project" value="UniProtKB-KW"/>
</dbReference>
<dbReference type="GO" id="GO:0003735">
    <property type="term" value="F:structural constituent of ribosome"/>
    <property type="evidence" value="ECO:0007669"/>
    <property type="project" value="InterPro"/>
</dbReference>
<dbReference type="GO" id="GO:0006412">
    <property type="term" value="P:translation"/>
    <property type="evidence" value="ECO:0007669"/>
    <property type="project" value="UniProtKB-UniRule"/>
</dbReference>
<dbReference type="HAMAP" id="MF_00251">
    <property type="entry name" value="Ribosomal_bL36"/>
    <property type="match status" value="1"/>
</dbReference>
<dbReference type="InterPro" id="IPR000473">
    <property type="entry name" value="Ribosomal_bL36"/>
</dbReference>
<dbReference type="InterPro" id="IPR035977">
    <property type="entry name" value="Ribosomal_bL36_sp"/>
</dbReference>
<dbReference type="NCBIfam" id="TIGR01022">
    <property type="entry name" value="rpmJ_bact"/>
    <property type="match status" value="1"/>
</dbReference>
<dbReference type="PANTHER" id="PTHR42888">
    <property type="entry name" value="50S RIBOSOMAL PROTEIN L36, CHLOROPLASTIC"/>
    <property type="match status" value="1"/>
</dbReference>
<dbReference type="PANTHER" id="PTHR42888:SF1">
    <property type="entry name" value="LARGE RIBOSOMAL SUBUNIT PROTEIN BL36C"/>
    <property type="match status" value="1"/>
</dbReference>
<dbReference type="Pfam" id="PF00444">
    <property type="entry name" value="Ribosomal_L36"/>
    <property type="match status" value="1"/>
</dbReference>
<dbReference type="SUPFAM" id="SSF57840">
    <property type="entry name" value="Ribosomal protein L36"/>
    <property type="match status" value="1"/>
</dbReference>
<dbReference type="PROSITE" id="PS00828">
    <property type="entry name" value="RIBOSOMAL_L36"/>
    <property type="match status" value="1"/>
</dbReference>
<protein>
    <recommendedName>
        <fullName evidence="1">Large ribosomal subunit protein bL36</fullName>
    </recommendedName>
    <alternativeName>
        <fullName evidence="2">50S ribosomal protein L36</fullName>
    </alternativeName>
</protein>
<proteinExistence type="evidence at protein level"/>
<name>RL36_STAA8</name>
<keyword id="KW-0002">3D-structure</keyword>
<keyword id="KW-1185">Reference proteome</keyword>
<keyword id="KW-0687">Ribonucleoprotein</keyword>
<keyword id="KW-0689">Ribosomal protein</keyword>
<sequence length="37" mass="4305">MKVRPSVKPICEKCKVIKRKGKVMVICENPKHKQRQG</sequence>
<gene>
    <name evidence="1" type="primary">rpmJ</name>
    <name type="ordered locus">SAOUHSC_02488</name>
</gene>
<reference key="1">
    <citation type="book" date="2006" name="Gram positive pathogens, 2nd edition">
        <title>The Staphylococcus aureus NCTC 8325 genome.</title>
        <editorList>
            <person name="Fischetti V."/>
            <person name="Novick R."/>
            <person name="Ferretti J."/>
            <person name="Portnoy D."/>
            <person name="Rood J."/>
        </editorList>
        <authorList>
            <person name="Gillaspy A.F."/>
            <person name="Worrell V."/>
            <person name="Orvis J."/>
            <person name="Roe B.A."/>
            <person name="Dyer D.W."/>
            <person name="Iandolo J.J."/>
        </authorList>
    </citation>
    <scope>NUCLEOTIDE SEQUENCE [LARGE SCALE GENOMIC DNA]</scope>
    <source>
        <strain>NCTC 8325 / PS 47</strain>
    </source>
</reference>
<accession>Q2FW29</accession>